<evidence type="ECO:0000255" key="1">
    <source>
        <dbReference type="HAMAP-Rule" id="MF_00765"/>
    </source>
</evidence>
<dbReference type="EMBL" id="CP000712">
    <property type="protein sequence ID" value="ABQ77142.1"/>
    <property type="molecule type" value="Genomic_DNA"/>
</dbReference>
<dbReference type="SMR" id="A5VZ32"/>
<dbReference type="KEGG" id="ppf:Pput_0981"/>
<dbReference type="eggNOG" id="COG3028">
    <property type="taxonomic scope" value="Bacteria"/>
</dbReference>
<dbReference type="HOGENOM" id="CLU_106757_4_0_6"/>
<dbReference type="GO" id="GO:0005829">
    <property type="term" value="C:cytosol"/>
    <property type="evidence" value="ECO:0007669"/>
    <property type="project" value="TreeGrafter"/>
</dbReference>
<dbReference type="GO" id="GO:0043022">
    <property type="term" value="F:ribosome binding"/>
    <property type="evidence" value="ECO:0007669"/>
    <property type="project" value="UniProtKB-UniRule"/>
</dbReference>
<dbReference type="GO" id="GO:0019843">
    <property type="term" value="F:rRNA binding"/>
    <property type="evidence" value="ECO:0007669"/>
    <property type="project" value="UniProtKB-UniRule"/>
</dbReference>
<dbReference type="GO" id="GO:1902626">
    <property type="term" value="P:assembly of large subunit precursor of preribosome"/>
    <property type="evidence" value="ECO:0007669"/>
    <property type="project" value="UniProtKB-UniRule"/>
</dbReference>
<dbReference type="CDD" id="cd16331">
    <property type="entry name" value="YjgA-like"/>
    <property type="match status" value="1"/>
</dbReference>
<dbReference type="FunFam" id="1.10.60.30:FF:000002">
    <property type="entry name" value="UPF0307 protein YjgA"/>
    <property type="match status" value="1"/>
</dbReference>
<dbReference type="Gene3D" id="1.10.60.30">
    <property type="entry name" value="PSPTO4464-like domains"/>
    <property type="match status" value="2"/>
</dbReference>
<dbReference type="HAMAP" id="MF_00765">
    <property type="entry name" value="DarP"/>
    <property type="match status" value="1"/>
</dbReference>
<dbReference type="InterPro" id="IPR006839">
    <property type="entry name" value="DarP"/>
</dbReference>
<dbReference type="InterPro" id="IPR023153">
    <property type="entry name" value="DarP_sf"/>
</dbReference>
<dbReference type="NCBIfam" id="NF003593">
    <property type="entry name" value="PRK05255.1-1"/>
    <property type="match status" value="1"/>
</dbReference>
<dbReference type="PANTHER" id="PTHR38101">
    <property type="entry name" value="UPF0307 PROTEIN YJGA"/>
    <property type="match status" value="1"/>
</dbReference>
<dbReference type="PANTHER" id="PTHR38101:SF1">
    <property type="entry name" value="UPF0307 PROTEIN YJGA"/>
    <property type="match status" value="1"/>
</dbReference>
<dbReference type="Pfam" id="PF04751">
    <property type="entry name" value="DarP"/>
    <property type="match status" value="1"/>
</dbReference>
<dbReference type="PIRSF" id="PIRSF016183">
    <property type="entry name" value="UCP016183"/>
    <property type="match status" value="1"/>
</dbReference>
<dbReference type="SUPFAM" id="SSF158710">
    <property type="entry name" value="PSPTO4464-like"/>
    <property type="match status" value="1"/>
</dbReference>
<sequence>MVDSNDDAFDGEKSKTQIKRELHALVELGERLTTLKADTLARLPLTDELRKALAEASKHTAHGARKRHMSFVGKLMRVQDLDAIHALLEQMDSSTRQYNERFHSLERWRDRLIDGNDEDLERFVNEYPDTDRQQLRSLVRHAQHEKARNKPPAAARKVFKYIRDLDELQRGLR</sequence>
<reference key="1">
    <citation type="submission" date="2007-05" db="EMBL/GenBank/DDBJ databases">
        <title>Complete sequence of Pseudomonas putida F1.</title>
        <authorList>
            <consortium name="US DOE Joint Genome Institute"/>
            <person name="Copeland A."/>
            <person name="Lucas S."/>
            <person name="Lapidus A."/>
            <person name="Barry K."/>
            <person name="Detter J.C."/>
            <person name="Glavina del Rio T."/>
            <person name="Hammon N."/>
            <person name="Israni S."/>
            <person name="Dalin E."/>
            <person name="Tice H."/>
            <person name="Pitluck S."/>
            <person name="Chain P."/>
            <person name="Malfatti S."/>
            <person name="Shin M."/>
            <person name="Vergez L."/>
            <person name="Schmutz J."/>
            <person name="Larimer F."/>
            <person name="Land M."/>
            <person name="Hauser L."/>
            <person name="Kyrpides N."/>
            <person name="Lykidis A."/>
            <person name="Parales R."/>
            <person name="Richardson P."/>
        </authorList>
    </citation>
    <scope>NUCLEOTIDE SEQUENCE [LARGE SCALE GENOMIC DNA]</scope>
    <source>
        <strain>ATCC 700007 / DSM 6899 / JCM 31910 / BCRC 17059 / LMG 24140 / F1</strain>
    </source>
</reference>
<organism>
    <name type="scientific">Pseudomonas putida (strain ATCC 700007 / DSM 6899 / JCM 31910 / BCRC 17059 / LMG 24140 / F1)</name>
    <dbReference type="NCBI Taxonomy" id="351746"/>
    <lineage>
        <taxon>Bacteria</taxon>
        <taxon>Pseudomonadati</taxon>
        <taxon>Pseudomonadota</taxon>
        <taxon>Gammaproteobacteria</taxon>
        <taxon>Pseudomonadales</taxon>
        <taxon>Pseudomonadaceae</taxon>
        <taxon>Pseudomonas</taxon>
    </lineage>
</organism>
<feature type="chain" id="PRO_1000062224" description="Dual-action ribosomal maturation protein DarP">
    <location>
        <begin position="1"/>
        <end position="173"/>
    </location>
</feature>
<accession>A5VZ32</accession>
<gene>
    <name evidence="1" type="primary">darP</name>
    <name type="ordered locus">Pput_0981</name>
</gene>
<protein>
    <recommendedName>
        <fullName evidence="1">Dual-action ribosomal maturation protein DarP</fullName>
    </recommendedName>
    <alternativeName>
        <fullName evidence="1">Large ribosomal subunit assembly factor DarP</fullName>
    </alternativeName>
</protein>
<comment type="function">
    <text evidence="1">Member of a network of 50S ribosomal subunit biogenesis factors which assembles along the 30S-50S interface, preventing incorrect 23S rRNA structures from forming. Promotes peptidyl transferase center (PTC) maturation.</text>
</comment>
<comment type="subcellular location">
    <subcellularLocation>
        <location evidence="1">Cytoplasm</location>
    </subcellularLocation>
    <text evidence="1">Associates with late stage pre-50S ribosomal subunits.</text>
</comment>
<comment type="similarity">
    <text evidence="1">Belongs to the DarP family.</text>
</comment>
<keyword id="KW-0963">Cytoplasm</keyword>
<keyword id="KW-0690">Ribosome biogenesis</keyword>
<keyword id="KW-0694">RNA-binding</keyword>
<keyword id="KW-0699">rRNA-binding</keyword>
<proteinExistence type="inferred from homology"/>
<name>DARP_PSEP1</name>